<sequence length="10" mass="1154">ELCCPMERSS</sequence>
<name>SLB_TROWA</name>
<comment type="function">
    <text evidence="2">Potently induces platelet aggregation of washed human platelet and platelet-rich plasma in a concentration-dependent manner. It acts by binding to GPVI (GP6), leading to kinases-dependent exposure of functional alpha-IIb/beta-3 and platelet aggregation, and also induces metalloproteinase-dependent GP6 shedding from platelets.</text>
</comment>
<comment type="subunit">
    <text evidence="2">Hexamer of heterodimers of subunits alpha and beta (alphabeta)(6); disulfide-linked.</text>
</comment>
<comment type="subcellular location">
    <subcellularLocation>
        <location>Secreted</location>
    </subcellularLocation>
</comment>
<comment type="tissue specificity">
    <text>Expressed by the venom gland.</text>
</comment>
<comment type="mass spectrometry" mass="16800.0" method="MALDI" evidence="2"/>
<comment type="miscellaneous">
    <text evidence="4">Negative results: does not bind to GPIb and alpha-2 integrin. Does not agglutinate the formalin-fixed platelets, even at high concentrations (PubMed:18221359).</text>
</comment>
<comment type="similarity">
    <text evidence="3">Belongs to the snaclec family.</text>
</comment>
<dbReference type="GO" id="GO:0005576">
    <property type="term" value="C:extracellular region"/>
    <property type="evidence" value="ECO:0007669"/>
    <property type="project" value="UniProtKB-SubCell"/>
</dbReference>
<dbReference type="GO" id="GO:0090729">
    <property type="term" value="F:toxin activity"/>
    <property type="evidence" value="ECO:0007669"/>
    <property type="project" value="UniProtKB-KW"/>
</dbReference>
<protein>
    <recommendedName>
        <fullName>Snaclec trowaglerix subunit beta</fullName>
    </recommendedName>
</protein>
<accession>P0DMM7</accession>
<evidence type="ECO:0000250" key="1"/>
<evidence type="ECO:0000269" key="2">
    <source>
    </source>
</evidence>
<evidence type="ECO:0000305" key="3"/>
<evidence type="ECO:0000305" key="4">
    <source>
    </source>
</evidence>
<organism>
    <name type="scientific">Tropidolaemus wagleri</name>
    <name type="common">Wagler's pit viper</name>
    <name type="synonym">Trimeresurus wagleri</name>
    <dbReference type="NCBI Taxonomy" id="8770"/>
    <lineage>
        <taxon>Eukaryota</taxon>
        <taxon>Metazoa</taxon>
        <taxon>Chordata</taxon>
        <taxon>Craniata</taxon>
        <taxon>Vertebrata</taxon>
        <taxon>Euteleostomi</taxon>
        <taxon>Lepidosauria</taxon>
        <taxon>Squamata</taxon>
        <taxon>Bifurcata</taxon>
        <taxon>Unidentata</taxon>
        <taxon>Episquamata</taxon>
        <taxon>Toxicofera</taxon>
        <taxon>Serpentes</taxon>
        <taxon>Colubroidea</taxon>
        <taxon>Viperidae</taxon>
        <taxon>Crotalinae</taxon>
        <taxon>Tropidolaemus</taxon>
    </lineage>
</organism>
<proteinExistence type="evidence at protein level"/>
<reference key="1">
    <citation type="journal article" date="2008" name="J. Thromb. Haemost.">
        <title>The highly specific platelet glycoprotein (GP) VI agonist trowaglerix impaired collagen-induced platelet aggregation ex vivo through matrix metalloproteinase-dependent GPVI shedding.</title>
        <authorList>
            <person name="Chang C.H."/>
            <person name="Chung C.H."/>
            <person name="Kuo H.L."/>
            <person name="Hsu C.C."/>
            <person name="Huang T.F."/>
        </authorList>
    </citation>
    <scope>PROTEIN SEQUENCE</scope>
    <scope>FUNCTION</scope>
    <scope>SUBUNIT</scope>
    <scope>MASS SPECTROMETRY</scope>
    <source>
        <tissue>Venom</tissue>
    </source>
</reference>
<keyword id="KW-0903">Direct protein sequencing</keyword>
<keyword id="KW-1015">Disulfide bond</keyword>
<keyword id="KW-1199">Hemostasis impairing toxin</keyword>
<keyword id="KW-1202">Platelet aggregation activating toxin</keyword>
<keyword id="KW-0964">Secreted</keyword>
<keyword id="KW-0800">Toxin</keyword>
<feature type="chain" id="PRO_0000430181" description="Snaclec trowaglerix subunit beta">
    <location>
        <begin position="1"/>
        <end position="10" status="greater than"/>
    </location>
</feature>
<feature type="disulfide bond" description="Interchain (with C-? in subunit alpha)" evidence="1">
    <location>
        <position position="3"/>
    </location>
</feature>
<feature type="disulfide bond" evidence="1">
    <location>
        <begin position="4"/>
        <end status="unknown"/>
    </location>
</feature>
<feature type="non-terminal residue">
    <location>
        <position position="10"/>
    </location>
</feature>